<dbReference type="EMBL" id="AE000782">
    <property type="protein sequence ID" value="AAB89848.1"/>
    <property type="molecule type" value="Genomic_DNA"/>
</dbReference>
<dbReference type="PIR" id="F69425">
    <property type="entry name" value="F69425"/>
</dbReference>
<dbReference type="RefSeq" id="WP_010878904.1">
    <property type="nucleotide sequence ID" value="NC_000917.1"/>
</dbReference>
<dbReference type="STRING" id="224325.AF_1407"/>
<dbReference type="PaxDb" id="224325-AF_1407"/>
<dbReference type="EnsemblBacteria" id="AAB89848">
    <property type="protein sequence ID" value="AAB89848"/>
    <property type="gene ID" value="AF_1407"/>
</dbReference>
<dbReference type="KEGG" id="afu:AF_1407"/>
<dbReference type="eggNOG" id="ENOG502N5BF">
    <property type="taxonomic scope" value="Archaea"/>
</dbReference>
<dbReference type="HOGENOM" id="CLU_1700180_0_0_2"/>
<dbReference type="OrthoDB" id="386883at2157"/>
<dbReference type="Proteomes" id="UP000002199">
    <property type="component" value="Chromosome"/>
</dbReference>
<protein>
    <recommendedName>
        <fullName>Uncharacterized protein AF_1407</fullName>
    </recommendedName>
</protein>
<feature type="chain" id="PRO_0000127997" description="Uncharacterized protein AF_1407">
    <location>
        <begin position="1"/>
        <end position="154"/>
    </location>
</feature>
<name>Y1407_ARCFU</name>
<reference key="1">
    <citation type="journal article" date="1997" name="Nature">
        <title>The complete genome sequence of the hyperthermophilic, sulphate-reducing archaeon Archaeoglobus fulgidus.</title>
        <authorList>
            <person name="Klenk H.-P."/>
            <person name="Clayton R.A."/>
            <person name="Tomb J.-F."/>
            <person name="White O."/>
            <person name="Nelson K.E."/>
            <person name="Ketchum K.A."/>
            <person name="Dodson R.J."/>
            <person name="Gwinn M.L."/>
            <person name="Hickey E.K."/>
            <person name="Peterson J.D."/>
            <person name="Richardson D.L."/>
            <person name="Kerlavage A.R."/>
            <person name="Graham D.E."/>
            <person name="Kyrpides N.C."/>
            <person name="Fleischmann R.D."/>
            <person name="Quackenbush J."/>
            <person name="Lee N.H."/>
            <person name="Sutton G.G."/>
            <person name="Gill S.R."/>
            <person name="Kirkness E.F."/>
            <person name="Dougherty B.A."/>
            <person name="McKenney K."/>
            <person name="Adams M.D."/>
            <person name="Loftus B.J."/>
            <person name="Peterson S.N."/>
            <person name="Reich C.I."/>
            <person name="McNeil L.K."/>
            <person name="Badger J.H."/>
            <person name="Glodek A."/>
            <person name="Zhou L."/>
            <person name="Overbeek R."/>
            <person name="Gocayne J.D."/>
            <person name="Weidman J.F."/>
            <person name="McDonald L.A."/>
            <person name="Utterback T.R."/>
            <person name="Cotton M.D."/>
            <person name="Spriggs T."/>
            <person name="Artiach P."/>
            <person name="Kaine B.P."/>
            <person name="Sykes S.M."/>
            <person name="Sadow P.W."/>
            <person name="D'Andrea K.P."/>
            <person name="Bowman C."/>
            <person name="Fujii C."/>
            <person name="Garland S.A."/>
            <person name="Mason T.M."/>
            <person name="Olsen G.J."/>
            <person name="Fraser C.M."/>
            <person name="Smith H.O."/>
            <person name="Woese C.R."/>
            <person name="Venter J.C."/>
        </authorList>
    </citation>
    <scope>NUCLEOTIDE SEQUENCE [LARGE SCALE GENOMIC DNA]</scope>
    <source>
        <strain>ATCC 49558 / DSM 4304 / JCM 9628 / NBRC 100126 / VC-16</strain>
    </source>
</reference>
<keyword id="KW-1185">Reference proteome</keyword>
<sequence length="154" mass="18101">MGLQKKLNYKKTESERSFYRGSNLKQVMGEDIVSKFDYIGPIRWIFLNYCTGYFIFVEELTNNSEIRSDRLEFIDTMNKIFSEAEQYFNSAPKERPKNPKSLAEYKYLGYYRLSFSNTNPDNSAIIRLNDVEVEKSELPPLLNLDTDEILDYAV</sequence>
<proteinExistence type="predicted"/>
<accession>O28865</accession>
<gene>
    <name type="ordered locus">AF_1407</name>
</gene>
<organism>
    <name type="scientific">Archaeoglobus fulgidus (strain ATCC 49558 / DSM 4304 / JCM 9628 / NBRC 100126 / VC-16)</name>
    <dbReference type="NCBI Taxonomy" id="224325"/>
    <lineage>
        <taxon>Archaea</taxon>
        <taxon>Methanobacteriati</taxon>
        <taxon>Methanobacteriota</taxon>
        <taxon>Archaeoglobi</taxon>
        <taxon>Archaeoglobales</taxon>
        <taxon>Archaeoglobaceae</taxon>
        <taxon>Archaeoglobus</taxon>
    </lineage>
</organism>